<comment type="function">
    <text evidence="1">Translational regulator that ensures constant high levels of translation upon a variety of stress conditions, such as amino acid starvation, UV-C irradiation, proteasome inhibitor treatment and glucose deprivation. Plays a role as a negative regulator of the EIF2AK4/GCN2 kinase activity; impairs GCN1-mediated EIF2AK4/GCN2 activation, and hence EIF2AK4/GCN2-mediated eIF-2-alpha phosphorylation and subsequent down-regulation of protein synthesis. May be required to regulate translation in specific neuronal cells under amino acid starvation conditions by preventing GCN2 activation and therefore ATF4 synthesis. Through its inhibitory action on EIF2AK4/GCN2, plays a role in differentiation of neuronal cells by stimulating neurite outgrowth.</text>
</comment>
<comment type="subunit">
    <text evidence="1">Interacts with GCN1; prevents the interaction of GCN1 with EIF2AK4/GCN2 and inhibits EIF2AK4/GCN2 kinase activity. Interaction with RPL39; this interaction occurs in a GCN1-independent manner. Associates with ribosomes; this interaction occurs in a GCN1-independent manner. Associates with actin; this interaction occurs in a GCN1-independent manner.</text>
</comment>
<comment type="interaction">
    <interactant intactId="EBI-2857352">
        <id>Q9P2X3</id>
    </interactant>
    <interactant intactId="EBI-372273">
        <id>P20618</id>
        <label>PSMB1</label>
    </interactant>
    <organismsDiffer>false</organismsDiffer>
    <experiments>3</experiments>
</comment>
<comment type="interaction">
    <interactant intactId="EBI-2857352">
        <id>Q9P2X3</id>
    </interactant>
    <interactant intactId="EBI-2932733">
        <id>P36955</id>
        <label>SERPINF1</label>
    </interactant>
    <organismsDiffer>false</organismsDiffer>
    <experiments>3</experiments>
</comment>
<comment type="subcellular location">
    <subcellularLocation>
        <location evidence="1">Cytoplasm</location>
    </subcellularLocation>
</comment>
<comment type="alternative products">
    <event type="alternative splicing"/>
    <isoform>
        <id>Q9P2X3-1</id>
        <name>1</name>
        <sequence type="displayed"/>
    </isoform>
    <isoform>
        <id>Q9P2X3-2</id>
        <name>2</name>
        <sequence type="described" ref="VSP_033136"/>
    </isoform>
</comment>
<comment type="tissue specificity">
    <text evidence="5 6">Widely expressed. Expressed at high level in brain.</text>
</comment>
<comment type="miscellaneous">
    <text>In contrast to the mouse or rabbit ortholog, the IMPACT locus is not imprinted in human.</text>
</comment>
<comment type="similarity">
    <text evidence="12">Belongs to the IMPACT family.</text>
</comment>
<gene>
    <name type="primary">IMPACT</name>
</gene>
<feature type="chain" id="PRO_0000330850" description="Protein IMPACT">
    <location>
        <begin position="1"/>
        <end position="320"/>
    </location>
</feature>
<feature type="domain" description="RWD" evidence="3">
    <location>
        <begin position="14"/>
        <end position="116"/>
    </location>
</feature>
<feature type="region of interest" description="Disordered" evidence="4">
    <location>
        <begin position="296"/>
        <end position="320"/>
    </location>
</feature>
<feature type="compositionally biased region" description="Basic residues" evidence="4">
    <location>
        <begin position="306"/>
        <end position="320"/>
    </location>
</feature>
<feature type="modified residue" description="Phosphoserine" evidence="2">
    <location>
        <position position="297"/>
    </location>
</feature>
<feature type="splice variant" id="VSP_033136" description="In isoform 2." evidence="11">
    <location>
        <begin position="1"/>
        <end position="118"/>
    </location>
</feature>
<feature type="sequence variant" id="VAR_077844" description="In dbSNP:rs544203385." evidence="10">
    <original>A</original>
    <variation>V</variation>
    <location>
        <position position="74"/>
    </location>
</feature>
<feature type="sequence variant" id="VAR_042723" description="In dbSNP:rs582234.">
    <original>D</original>
    <variation>E</variation>
    <location>
        <position position="125"/>
    </location>
</feature>
<feature type="sequence variant" id="VAR_042724" description="In dbSNP:rs677688." evidence="5 7 8 9">
    <original>L</original>
    <variation>V</variation>
    <location>
        <position position="151"/>
    </location>
</feature>
<accession>Q9P2X3</accession>
<accession>A8MXG0</accession>
<accession>Q49AM0</accession>
<accession>Q9H2X4</accession>
<keyword id="KW-0009">Actin-binding</keyword>
<keyword id="KW-0025">Alternative splicing</keyword>
<keyword id="KW-0963">Cytoplasm</keyword>
<keyword id="KW-0221">Differentiation</keyword>
<keyword id="KW-0524">Neurogenesis</keyword>
<keyword id="KW-0597">Phosphoprotein</keyword>
<keyword id="KW-1267">Proteomics identification</keyword>
<keyword id="KW-1185">Reference proteome</keyword>
<keyword id="KW-0678">Repressor</keyword>
<keyword id="KW-0346">Stress response</keyword>
<keyword id="KW-0810">Translation regulation</keyword>
<sequence length="320" mass="36476">MAEGDAGSDQRQNEEIEAMAAIYGEEWCVIDDCAKIFCIRISDDIDDPKWTLCLQVMLPNEYPGTAPPIYQLNAPWLKGQERADLSNSLEEIYIQNIGESILYLWVEKIRDVLIQKSQMTEPGPDVKKKTEEEDVECEDDLILACQPESSLKALDFDISETRTEVEVEELPPIDHGIPITDRRSTFQAHLAPVVCPKQVKMVLSKLYENKKIASATHNIYAYRIYCEDKQTFLQDCEDDGETAAGGRLLHLMEILNVKNVMVVVSRWYGGILLGPDRFKHINNCARNILVEKNYTNSPEESSKALGKNKKVRKDKKRNEH</sequence>
<name>IMPCT_HUMAN</name>
<organism>
    <name type="scientific">Homo sapiens</name>
    <name type="common">Human</name>
    <dbReference type="NCBI Taxonomy" id="9606"/>
    <lineage>
        <taxon>Eukaryota</taxon>
        <taxon>Metazoa</taxon>
        <taxon>Chordata</taxon>
        <taxon>Craniata</taxon>
        <taxon>Vertebrata</taxon>
        <taxon>Euteleostomi</taxon>
        <taxon>Mammalia</taxon>
        <taxon>Eutheria</taxon>
        <taxon>Euarchontoglires</taxon>
        <taxon>Primates</taxon>
        <taxon>Haplorrhini</taxon>
        <taxon>Catarrhini</taxon>
        <taxon>Hominidae</taxon>
        <taxon>Homo</taxon>
    </lineage>
</organism>
<evidence type="ECO:0000250" key="1">
    <source>
        <dbReference type="UniProtKB" id="O55091"/>
    </source>
</evidence>
<evidence type="ECO:0000250" key="2">
    <source>
        <dbReference type="UniProtKB" id="Q5GFD9"/>
    </source>
</evidence>
<evidence type="ECO:0000255" key="3">
    <source>
        <dbReference type="PROSITE-ProRule" id="PRU00179"/>
    </source>
</evidence>
<evidence type="ECO:0000256" key="4">
    <source>
        <dbReference type="SAM" id="MobiDB-lite"/>
    </source>
</evidence>
<evidence type="ECO:0000269" key="5">
    <source>
    </source>
</evidence>
<evidence type="ECO:0000269" key="6">
    <source>
    </source>
</evidence>
<evidence type="ECO:0000269" key="7">
    <source>
    </source>
</evidence>
<evidence type="ECO:0000269" key="8">
    <source>
    </source>
</evidence>
<evidence type="ECO:0000269" key="9">
    <source>
    </source>
</evidence>
<evidence type="ECO:0000269" key="10">
    <source>
    </source>
</evidence>
<evidence type="ECO:0000303" key="11">
    <source>
    </source>
</evidence>
<evidence type="ECO:0000305" key="12"/>
<protein>
    <recommendedName>
        <fullName>Protein IMPACT</fullName>
    </recommendedName>
    <alternativeName>
        <fullName>Imprinted and ancient gene protein homolog</fullName>
    </alternativeName>
</protein>
<dbReference type="EMBL" id="AF232229">
    <property type="protein sequence ID" value="AAG23917.1"/>
    <property type="molecule type" value="Genomic_DNA"/>
</dbReference>
<dbReference type="EMBL" id="AB026264">
    <property type="protein sequence ID" value="BAA95160.1"/>
    <property type="molecule type" value="mRNA"/>
</dbReference>
<dbReference type="EMBL" id="AF208694">
    <property type="protein sequence ID" value="AAG35736.1"/>
    <property type="molecule type" value="mRNA"/>
</dbReference>
<dbReference type="EMBL" id="AK292533">
    <property type="protein sequence ID" value="BAF85222.1"/>
    <property type="molecule type" value="mRNA"/>
</dbReference>
<dbReference type="EMBL" id="AC007922">
    <property type="status" value="NOT_ANNOTATED_CDS"/>
    <property type="molecule type" value="Genomic_DNA"/>
</dbReference>
<dbReference type="EMBL" id="AC020937">
    <property type="status" value="NOT_ANNOTATED_CDS"/>
    <property type="molecule type" value="Genomic_DNA"/>
</dbReference>
<dbReference type="EMBL" id="CH471088">
    <property type="protein sequence ID" value="EAX01186.1"/>
    <property type="molecule type" value="Genomic_DNA"/>
</dbReference>
<dbReference type="EMBL" id="BC034016">
    <property type="protein sequence ID" value="AAH34016.1"/>
    <property type="molecule type" value="mRNA"/>
</dbReference>
<dbReference type="EMBL" id="BC036074">
    <property type="protein sequence ID" value="AAH36074.1"/>
    <property type="molecule type" value="mRNA"/>
</dbReference>
<dbReference type="CCDS" id="CCDS11886.1">
    <molecule id="Q9P2X3-1"/>
</dbReference>
<dbReference type="RefSeq" id="NP_060909.2">
    <molecule id="Q9P2X3-1"/>
    <property type="nucleotide sequence ID" value="NM_018439.4"/>
</dbReference>
<dbReference type="SMR" id="Q9P2X3"/>
<dbReference type="BioGRID" id="120642">
    <property type="interactions" value="52"/>
</dbReference>
<dbReference type="FunCoup" id="Q9P2X3">
    <property type="interactions" value="607"/>
</dbReference>
<dbReference type="IntAct" id="Q9P2X3">
    <property type="interactions" value="45"/>
</dbReference>
<dbReference type="STRING" id="9606.ENSP00000284202"/>
<dbReference type="GlyGen" id="Q9P2X3">
    <property type="glycosylation" value="1 site, 1 O-linked glycan (1 site)"/>
</dbReference>
<dbReference type="iPTMnet" id="Q9P2X3"/>
<dbReference type="PhosphoSitePlus" id="Q9P2X3"/>
<dbReference type="BioMuta" id="IMPACT"/>
<dbReference type="DMDM" id="296434540"/>
<dbReference type="jPOST" id="Q9P2X3"/>
<dbReference type="MassIVE" id="Q9P2X3"/>
<dbReference type="PaxDb" id="9606-ENSP00000284202"/>
<dbReference type="PeptideAtlas" id="Q9P2X3"/>
<dbReference type="ProteomicsDB" id="83909">
    <molecule id="Q9P2X3-1"/>
</dbReference>
<dbReference type="ProteomicsDB" id="83910">
    <molecule id="Q9P2X3-2"/>
</dbReference>
<dbReference type="Pumba" id="Q9P2X3"/>
<dbReference type="Antibodypedia" id="22092">
    <property type="antibodies" value="114 antibodies from 19 providers"/>
</dbReference>
<dbReference type="DNASU" id="55364"/>
<dbReference type="Ensembl" id="ENST00000284202.9">
    <molecule id="Q9P2X3-1"/>
    <property type="protein sequence ID" value="ENSP00000284202.4"/>
    <property type="gene ID" value="ENSG00000154059.11"/>
</dbReference>
<dbReference type="GeneID" id="55364"/>
<dbReference type="KEGG" id="hsa:55364"/>
<dbReference type="MANE-Select" id="ENST00000284202.9">
    <property type="protein sequence ID" value="ENSP00000284202.4"/>
    <property type="RefSeq nucleotide sequence ID" value="NM_018439.4"/>
    <property type="RefSeq protein sequence ID" value="NP_060909.2"/>
</dbReference>
<dbReference type="UCSC" id="uc002kvh.5">
    <molecule id="Q9P2X3-1"/>
    <property type="organism name" value="human"/>
</dbReference>
<dbReference type="AGR" id="HGNC:20387"/>
<dbReference type="CTD" id="55364"/>
<dbReference type="DisGeNET" id="55364"/>
<dbReference type="GeneCards" id="IMPACT"/>
<dbReference type="HGNC" id="HGNC:20387">
    <property type="gene designation" value="IMPACT"/>
</dbReference>
<dbReference type="HPA" id="ENSG00000154059">
    <property type="expression patterns" value="Low tissue specificity"/>
</dbReference>
<dbReference type="MIM" id="615319">
    <property type="type" value="gene"/>
</dbReference>
<dbReference type="neXtProt" id="NX_Q9P2X3"/>
<dbReference type="OpenTargets" id="ENSG00000154059"/>
<dbReference type="PharmGKB" id="PA143485502"/>
<dbReference type="VEuPathDB" id="HostDB:ENSG00000154059"/>
<dbReference type="eggNOG" id="KOG3299">
    <property type="taxonomic scope" value="Eukaryota"/>
</dbReference>
<dbReference type="GeneTree" id="ENSGT00390000017571"/>
<dbReference type="HOGENOM" id="CLU_045276_1_0_1"/>
<dbReference type="InParanoid" id="Q9P2X3"/>
<dbReference type="OrthoDB" id="69641at2759"/>
<dbReference type="PAN-GO" id="Q9P2X3">
    <property type="GO annotations" value="1 GO annotation based on evolutionary models"/>
</dbReference>
<dbReference type="PhylomeDB" id="Q9P2X3"/>
<dbReference type="TreeFam" id="TF314823"/>
<dbReference type="PathwayCommons" id="Q9P2X3"/>
<dbReference type="Reactome" id="R-HSA-9633012">
    <property type="pathway name" value="Response of EIF2AK4 (GCN2) to amino acid deficiency"/>
</dbReference>
<dbReference type="SignaLink" id="Q9P2X3"/>
<dbReference type="SIGNOR" id="Q9P2X3"/>
<dbReference type="BioGRID-ORCS" id="55364">
    <property type="hits" value="11 hits in 1150 CRISPR screens"/>
</dbReference>
<dbReference type="ChiTaRS" id="IMPACT">
    <property type="organism name" value="human"/>
</dbReference>
<dbReference type="GenomeRNAi" id="55364"/>
<dbReference type="Pharos" id="Q9P2X3">
    <property type="development level" value="Tbio"/>
</dbReference>
<dbReference type="PRO" id="PR:Q9P2X3"/>
<dbReference type="Proteomes" id="UP000005640">
    <property type="component" value="Chromosome 18"/>
</dbReference>
<dbReference type="RNAct" id="Q9P2X3">
    <property type="molecule type" value="protein"/>
</dbReference>
<dbReference type="Bgee" id="ENSG00000154059">
    <property type="expression patterns" value="Expressed in calcaneal tendon and 195 other cell types or tissues"/>
</dbReference>
<dbReference type="ExpressionAtlas" id="Q9P2X3">
    <property type="expression patterns" value="baseline and differential"/>
</dbReference>
<dbReference type="GO" id="GO:0005737">
    <property type="term" value="C:cytoplasm"/>
    <property type="evidence" value="ECO:0000250"/>
    <property type="project" value="UniProtKB"/>
</dbReference>
<dbReference type="GO" id="GO:0003779">
    <property type="term" value="F:actin binding"/>
    <property type="evidence" value="ECO:0007669"/>
    <property type="project" value="UniProtKB-KW"/>
</dbReference>
<dbReference type="GO" id="GO:0140311">
    <property type="term" value="F:protein sequestering activity"/>
    <property type="evidence" value="ECO:0000250"/>
    <property type="project" value="UniProtKB"/>
</dbReference>
<dbReference type="GO" id="GO:0043022">
    <property type="term" value="F:ribosome binding"/>
    <property type="evidence" value="ECO:0007669"/>
    <property type="project" value="Ensembl"/>
</dbReference>
<dbReference type="GO" id="GO:0034198">
    <property type="term" value="P:cellular response to amino acid starvation"/>
    <property type="evidence" value="ECO:0000250"/>
    <property type="project" value="UniProtKB"/>
</dbReference>
<dbReference type="GO" id="GO:0140469">
    <property type="term" value="P:GCN2-mediated signaling"/>
    <property type="evidence" value="ECO:0000250"/>
    <property type="project" value="UniProtKB"/>
</dbReference>
<dbReference type="GO" id="GO:0035556">
    <property type="term" value="P:intracellular signal transduction"/>
    <property type="evidence" value="ECO:0000250"/>
    <property type="project" value="UniProtKB"/>
</dbReference>
<dbReference type="GO" id="GO:0000122">
    <property type="term" value="P:negative regulation of transcription by RNA polymerase II"/>
    <property type="evidence" value="ECO:0000250"/>
    <property type="project" value="UniProtKB"/>
</dbReference>
<dbReference type="GO" id="GO:1990138">
    <property type="term" value="P:neuron projection extension"/>
    <property type="evidence" value="ECO:0000250"/>
    <property type="project" value="UniProtKB"/>
</dbReference>
<dbReference type="GO" id="GO:0045666">
    <property type="term" value="P:positive regulation of neuron differentiation"/>
    <property type="evidence" value="ECO:0000250"/>
    <property type="project" value="UniProtKB"/>
</dbReference>
<dbReference type="GO" id="GO:1990611">
    <property type="term" value="P:regulation of cytoplasmic translational initiation in response to stress"/>
    <property type="evidence" value="ECO:0000250"/>
    <property type="project" value="UniProtKB"/>
</dbReference>
<dbReference type="GO" id="GO:0006446">
    <property type="term" value="P:regulation of translational initiation"/>
    <property type="evidence" value="ECO:0000318"/>
    <property type="project" value="GO_Central"/>
</dbReference>
<dbReference type="CDD" id="cd23821">
    <property type="entry name" value="RWD_IMPACT"/>
    <property type="match status" value="1"/>
</dbReference>
<dbReference type="FunFam" id="3.10.110.10:FF:000066">
    <property type="entry name" value="IMPACT isoform 1"/>
    <property type="match status" value="1"/>
</dbReference>
<dbReference type="FunFam" id="3.30.230.30:FF:000001">
    <property type="entry name" value="IMPACT isoform 1"/>
    <property type="match status" value="1"/>
</dbReference>
<dbReference type="Gene3D" id="3.30.230.30">
    <property type="entry name" value="Impact, N-terminal domain"/>
    <property type="match status" value="1"/>
</dbReference>
<dbReference type="Gene3D" id="3.10.110.10">
    <property type="entry name" value="Ubiquitin Conjugating Enzyme"/>
    <property type="match status" value="1"/>
</dbReference>
<dbReference type="InterPro" id="IPR023582">
    <property type="entry name" value="Impact"/>
</dbReference>
<dbReference type="InterPro" id="IPR001498">
    <property type="entry name" value="Impact_N"/>
</dbReference>
<dbReference type="InterPro" id="IPR036956">
    <property type="entry name" value="Impact_N_sf"/>
</dbReference>
<dbReference type="InterPro" id="IPR020568">
    <property type="entry name" value="Ribosomal_Su5_D2-typ_SF"/>
</dbReference>
<dbReference type="InterPro" id="IPR006575">
    <property type="entry name" value="RWD_dom"/>
</dbReference>
<dbReference type="InterPro" id="IPR016135">
    <property type="entry name" value="UBQ-conjugating_enzyme/RWD"/>
</dbReference>
<dbReference type="InterPro" id="IPR020569">
    <property type="entry name" value="UPF0029_Impact_CS"/>
</dbReference>
<dbReference type="PANTHER" id="PTHR16301">
    <property type="entry name" value="IMPACT-RELATED"/>
    <property type="match status" value="1"/>
</dbReference>
<dbReference type="PANTHER" id="PTHR16301:SF25">
    <property type="entry name" value="PROTEIN IMPACT"/>
    <property type="match status" value="1"/>
</dbReference>
<dbReference type="Pfam" id="PF05773">
    <property type="entry name" value="RWD"/>
    <property type="match status" value="1"/>
</dbReference>
<dbReference type="Pfam" id="PF01205">
    <property type="entry name" value="UPF0029"/>
    <property type="match status" value="1"/>
</dbReference>
<dbReference type="SMART" id="SM00591">
    <property type="entry name" value="RWD"/>
    <property type="match status" value="1"/>
</dbReference>
<dbReference type="SUPFAM" id="SSF54211">
    <property type="entry name" value="Ribosomal protein S5 domain 2-like"/>
    <property type="match status" value="1"/>
</dbReference>
<dbReference type="SUPFAM" id="SSF54495">
    <property type="entry name" value="UBC-like"/>
    <property type="match status" value="1"/>
</dbReference>
<dbReference type="PROSITE" id="PS50908">
    <property type="entry name" value="RWD"/>
    <property type="match status" value="1"/>
</dbReference>
<dbReference type="PROSITE" id="PS00910">
    <property type="entry name" value="UPF0029"/>
    <property type="match status" value="1"/>
</dbReference>
<proteinExistence type="evidence at protein level"/>
<reference key="1">
    <citation type="journal article" date="2000" name="Genome Res.">
        <title>Comparative genome analysis of the mouse imprinted gene impact and its nonimprinted human homolog IMPACT: toward the structural basis for species-specific imprinting.</title>
        <authorList>
            <person name="Okamura K."/>
            <person name="Hagiwara-Takeuchi Y."/>
            <person name="Li T."/>
            <person name="Vu T.H."/>
            <person name="Hirai M."/>
            <person name="Hattori M."/>
            <person name="Sakaki Y."/>
            <person name="Hoffman A.R."/>
            <person name="Ito T."/>
        </authorList>
    </citation>
    <scope>NUCLEOTIDE SEQUENCE [GENOMIC DNA / MRNA] (ISOFORM 1)</scope>
    <scope>LACK OF IMPRINTING</scope>
    <scope>TISSUE SPECIFICITY</scope>
    <scope>VARIANT VAL-151</scope>
</reference>
<reference key="2">
    <citation type="journal article" date="2001" name="Mol. Psychiatry">
        <title>Human homolog of the mouse imprinted gene Impact resides at the pericentric region of chromosome 18 within the critical region for bipolar affective disorder.</title>
        <authorList>
            <person name="Kosaki K."/>
            <person name="Suzuki T."/>
            <person name="Kosaki R."/>
            <person name="Yoshihashi H."/>
            <person name="Itoh M."/>
            <person name="Goto Y."/>
            <person name="Matsuo N."/>
        </authorList>
    </citation>
    <scope>NUCLEOTIDE SEQUENCE [MRNA] (ISOFORM 1)</scope>
    <scope>TISSUE SPECIFICITY</scope>
</reference>
<reference key="3">
    <citation type="journal article" date="2004" name="Nat. Genet.">
        <title>Complete sequencing and characterization of 21,243 full-length human cDNAs.</title>
        <authorList>
            <person name="Ota T."/>
            <person name="Suzuki Y."/>
            <person name="Nishikawa T."/>
            <person name="Otsuki T."/>
            <person name="Sugiyama T."/>
            <person name="Irie R."/>
            <person name="Wakamatsu A."/>
            <person name="Hayashi K."/>
            <person name="Sato H."/>
            <person name="Nagai K."/>
            <person name="Kimura K."/>
            <person name="Makita H."/>
            <person name="Sekine M."/>
            <person name="Obayashi M."/>
            <person name="Nishi T."/>
            <person name="Shibahara T."/>
            <person name="Tanaka T."/>
            <person name="Ishii S."/>
            <person name="Yamamoto J."/>
            <person name="Saito K."/>
            <person name="Kawai Y."/>
            <person name="Isono Y."/>
            <person name="Nakamura Y."/>
            <person name="Nagahari K."/>
            <person name="Murakami K."/>
            <person name="Yasuda T."/>
            <person name="Iwayanagi T."/>
            <person name="Wagatsuma M."/>
            <person name="Shiratori A."/>
            <person name="Sudo H."/>
            <person name="Hosoiri T."/>
            <person name="Kaku Y."/>
            <person name="Kodaira H."/>
            <person name="Kondo H."/>
            <person name="Sugawara M."/>
            <person name="Takahashi M."/>
            <person name="Kanda K."/>
            <person name="Yokoi T."/>
            <person name="Furuya T."/>
            <person name="Kikkawa E."/>
            <person name="Omura Y."/>
            <person name="Abe K."/>
            <person name="Kamihara K."/>
            <person name="Katsuta N."/>
            <person name="Sato K."/>
            <person name="Tanikawa M."/>
            <person name="Yamazaki M."/>
            <person name="Ninomiya K."/>
            <person name="Ishibashi T."/>
            <person name="Yamashita H."/>
            <person name="Murakawa K."/>
            <person name="Fujimori K."/>
            <person name="Tanai H."/>
            <person name="Kimata M."/>
            <person name="Watanabe M."/>
            <person name="Hiraoka S."/>
            <person name="Chiba Y."/>
            <person name="Ishida S."/>
            <person name="Ono Y."/>
            <person name="Takiguchi S."/>
            <person name="Watanabe S."/>
            <person name="Yosida M."/>
            <person name="Hotuta T."/>
            <person name="Kusano J."/>
            <person name="Kanehori K."/>
            <person name="Takahashi-Fujii A."/>
            <person name="Hara H."/>
            <person name="Tanase T.-O."/>
            <person name="Nomura Y."/>
            <person name="Togiya S."/>
            <person name="Komai F."/>
            <person name="Hara R."/>
            <person name="Takeuchi K."/>
            <person name="Arita M."/>
            <person name="Imose N."/>
            <person name="Musashino K."/>
            <person name="Yuuki H."/>
            <person name="Oshima A."/>
            <person name="Sasaki N."/>
            <person name="Aotsuka S."/>
            <person name="Yoshikawa Y."/>
            <person name="Matsunawa H."/>
            <person name="Ichihara T."/>
            <person name="Shiohata N."/>
            <person name="Sano S."/>
            <person name="Moriya S."/>
            <person name="Momiyama H."/>
            <person name="Satoh N."/>
            <person name="Takami S."/>
            <person name="Terashima Y."/>
            <person name="Suzuki O."/>
            <person name="Nakagawa S."/>
            <person name="Senoh A."/>
            <person name="Mizoguchi H."/>
            <person name="Goto Y."/>
            <person name="Shimizu F."/>
            <person name="Wakebe H."/>
            <person name="Hishigaki H."/>
            <person name="Watanabe T."/>
            <person name="Sugiyama A."/>
            <person name="Takemoto M."/>
            <person name="Kawakami B."/>
            <person name="Yamazaki M."/>
            <person name="Watanabe K."/>
            <person name="Kumagai A."/>
            <person name="Itakura S."/>
            <person name="Fukuzumi Y."/>
            <person name="Fujimori Y."/>
            <person name="Komiyama M."/>
            <person name="Tashiro H."/>
            <person name="Tanigami A."/>
            <person name="Fujiwara T."/>
            <person name="Ono T."/>
            <person name="Yamada K."/>
            <person name="Fujii Y."/>
            <person name="Ozaki K."/>
            <person name="Hirao M."/>
            <person name="Ohmori Y."/>
            <person name="Kawabata A."/>
            <person name="Hikiji T."/>
            <person name="Kobatake N."/>
            <person name="Inagaki H."/>
            <person name="Ikema Y."/>
            <person name="Okamoto S."/>
            <person name="Okitani R."/>
            <person name="Kawakami T."/>
            <person name="Noguchi S."/>
            <person name="Itoh T."/>
            <person name="Shigeta K."/>
            <person name="Senba T."/>
            <person name="Matsumura K."/>
            <person name="Nakajima Y."/>
            <person name="Mizuno T."/>
            <person name="Morinaga M."/>
            <person name="Sasaki M."/>
            <person name="Togashi T."/>
            <person name="Oyama M."/>
            <person name="Hata H."/>
            <person name="Watanabe M."/>
            <person name="Komatsu T."/>
            <person name="Mizushima-Sugano J."/>
            <person name="Satoh T."/>
            <person name="Shirai Y."/>
            <person name="Takahashi Y."/>
            <person name="Nakagawa K."/>
            <person name="Okumura K."/>
            <person name="Nagase T."/>
            <person name="Nomura N."/>
            <person name="Kikuchi H."/>
            <person name="Masuho Y."/>
            <person name="Yamashita R."/>
            <person name="Nakai K."/>
            <person name="Yada T."/>
            <person name="Nakamura Y."/>
            <person name="Ohara O."/>
            <person name="Isogai T."/>
            <person name="Sugano S."/>
        </authorList>
    </citation>
    <scope>NUCLEOTIDE SEQUENCE [LARGE SCALE MRNA] (ISOFORM 1)</scope>
    <scope>VARIANT VAL-151</scope>
    <source>
        <tissue>Testis</tissue>
    </source>
</reference>
<reference key="4">
    <citation type="journal article" date="2005" name="Nature">
        <title>DNA sequence and analysis of human chromosome 18.</title>
        <authorList>
            <person name="Nusbaum C."/>
            <person name="Zody M.C."/>
            <person name="Borowsky M.L."/>
            <person name="Kamal M."/>
            <person name="Kodira C.D."/>
            <person name="Taylor T.D."/>
            <person name="Whittaker C.A."/>
            <person name="Chang J.L."/>
            <person name="Cuomo C.A."/>
            <person name="Dewar K."/>
            <person name="FitzGerald M.G."/>
            <person name="Yang X."/>
            <person name="Abouelleil A."/>
            <person name="Allen N.R."/>
            <person name="Anderson S."/>
            <person name="Bloom T."/>
            <person name="Bugalter B."/>
            <person name="Butler J."/>
            <person name="Cook A."/>
            <person name="DeCaprio D."/>
            <person name="Engels R."/>
            <person name="Garber M."/>
            <person name="Gnirke A."/>
            <person name="Hafez N."/>
            <person name="Hall J.L."/>
            <person name="Norman C.H."/>
            <person name="Itoh T."/>
            <person name="Jaffe D.B."/>
            <person name="Kuroki Y."/>
            <person name="Lehoczky J."/>
            <person name="Lui A."/>
            <person name="Macdonald P."/>
            <person name="Mauceli E."/>
            <person name="Mikkelsen T.S."/>
            <person name="Naylor J.W."/>
            <person name="Nicol R."/>
            <person name="Nguyen C."/>
            <person name="Noguchi H."/>
            <person name="O'Leary S.B."/>
            <person name="Piqani B."/>
            <person name="Smith C.L."/>
            <person name="Talamas J.A."/>
            <person name="Topham K."/>
            <person name="Totoki Y."/>
            <person name="Toyoda A."/>
            <person name="Wain H.M."/>
            <person name="Young S.K."/>
            <person name="Zeng Q."/>
            <person name="Zimmer A.R."/>
            <person name="Fujiyama A."/>
            <person name="Hattori M."/>
            <person name="Birren B.W."/>
            <person name="Sakaki Y."/>
            <person name="Lander E.S."/>
        </authorList>
    </citation>
    <scope>NUCLEOTIDE SEQUENCE [LARGE SCALE GENOMIC DNA]</scope>
    <scope>VARIANT VAL-151</scope>
</reference>
<reference key="5">
    <citation type="submission" date="2005-07" db="EMBL/GenBank/DDBJ databases">
        <authorList>
            <person name="Mural R.J."/>
            <person name="Istrail S."/>
            <person name="Sutton G.G."/>
            <person name="Florea L."/>
            <person name="Halpern A.L."/>
            <person name="Mobarry C.M."/>
            <person name="Lippert R."/>
            <person name="Walenz B."/>
            <person name="Shatkay H."/>
            <person name="Dew I."/>
            <person name="Miller J.R."/>
            <person name="Flanigan M.J."/>
            <person name="Edwards N.J."/>
            <person name="Bolanos R."/>
            <person name="Fasulo D."/>
            <person name="Halldorsson B.V."/>
            <person name="Hannenhalli S."/>
            <person name="Turner R."/>
            <person name="Yooseph S."/>
            <person name="Lu F."/>
            <person name="Nusskern D.R."/>
            <person name="Shue B.C."/>
            <person name="Zheng X.H."/>
            <person name="Zhong F."/>
            <person name="Delcher A.L."/>
            <person name="Huson D.H."/>
            <person name="Kravitz S.A."/>
            <person name="Mouchard L."/>
            <person name="Reinert K."/>
            <person name="Remington K.A."/>
            <person name="Clark A.G."/>
            <person name="Waterman M.S."/>
            <person name="Eichler E.E."/>
            <person name="Adams M.D."/>
            <person name="Hunkapiller M.W."/>
            <person name="Myers E.W."/>
            <person name="Venter J.C."/>
        </authorList>
    </citation>
    <scope>NUCLEOTIDE SEQUENCE [LARGE SCALE GENOMIC DNA]</scope>
</reference>
<reference key="6">
    <citation type="journal article" date="2004" name="Genome Res.">
        <title>The status, quality, and expansion of the NIH full-length cDNA project: the Mammalian Gene Collection (MGC).</title>
        <authorList>
            <consortium name="The MGC Project Team"/>
        </authorList>
    </citation>
    <scope>NUCLEOTIDE SEQUENCE [LARGE SCALE MRNA] (ISOFORMS 1 AND 2)</scope>
    <scope>VARIANT VAL-151</scope>
    <source>
        <tissue>Brain</tissue>
        <tissue>Lung</tissue>
    </source>
</reference>
<reference key="7">
    <citation type="journal article" date="2011" name="BMC Syst. Biol.">
        <title>Initial characterization of the human central proteome.</title>
        <authorList>
            <person name="Burkard T.R."/>
            <person name="Planyavsky M."/>
            <person name="Kaupe I."/>
            <person name="Breitwieser F.P."/>
            <person name="Buerckstuemmer T."/>
            <person name="Bennett K.L."/>
            <person name="Superti-Furga G."/>
            <person name="Colinge J."/>
        </authorList>
    </citation>
    <scope>IDENTIFICATION BY MASS SPECTROMETRY [LARGE SCALE ANALYSIS]</scope>
</reference>
<reference key="8">
    <citation type="journal article" date="2014" name="J. Proteomics">
        <title>An enzyme assisted RP-RPLC approach for in-depth analysis of human liver phosphoproteome.</title>
        <authorList>
            <person name="Bian Y."/>
            <person name="Song C."/>
            <person name="Cheng K."/>
            <person name="Dong M."/>
            <person name="Wang F."/>
            <person name="Huang J."/>
            <person name="Sun D."/>
            <person name="Wang L."/>
            <person name="Ye M."/>
            <person name="Zou H."/>
        </authorList>
    </citation>
    <scope>IDENTIFICATION BY MASS SPECTROMETRY [LARGE SCALE ANALYSIS]</scope>
    <source>
        <tissue>Liver</tissue>
    </source>
</reference>
<reference key="9">
    <citation type="journal article" date="2017" name="Clin. Genet.">
        <title>Loss of the proprioception and touch sensation channel PIEZO2 in siblings with a progressive form of contractures.</title>
        <authorList>
            <person name="Mahmud A.A."/>
            <person name="Nahid N.A."/>
            <person name="Nassif C."/>
            <person name="Sayeed M.S."/>
            <person name="Ahmed M.U."/>
            <person name="Parveen M."/>
            <person name="Khalil M.I."/>
            <person name="Islam M.M."/>
            <person name="Nahar Z."/>
            <person name="Rypens F."/>
            <person name="Hamdan F.F."/>
            <person name="Rouleau G.A."/>
            <person name="Hasnat A."/>
            <person name="Michaud J.L."/>
        </authorList>
    </citation>
    <scope>VARIANT VAL-74</scope>
</reference>